<reference key="1">
    <citation type="journal article" date="1997" name="Nature">
        <title>The complete genome sequence of the Gram-positive bacterium Bacillus subtilis.</title>
        <authorList>
            <person name="Kunst F."/>
            <person name="Ogasawara N."/>
            <person name="Moszer I."/>
            <person name="Albertini A.M."/>
            <person name="Alloni G."/>
            <person name="Azevedo V."/>
            <person name="Bertero M.G."/>
            <person name="Bessieres P."/>
            <person name="Bolotin A."/>
            <person name="Borchert S."/>
            <person name="Borriss R."/>
            <person name="Boursier L."/>
            <person name="Brans A."/>
            <person name="Braun M."/>
            <person name="Brignell S.C."/>
            <person name="Bron S."/>
            <person name="Brouillet S."/>
            <person name="Bruschi C.V."/>
            <person name="Caldwell B."/>
            <person name="Capuano V."/>
            <person name="Carter N.M."/>
            <person name="Choi S.-K."/>
            <person name="Codani J.-J."/>
            <person name="Connerton I.F."/>
            <person name="Cummings N.J."/>
            <person name="Daniel R.A."/>
            <person name="Denizot F."/>
            <person name="Devine K.M."/>
            <person name="Duesterhoeft A."/>
            <person name="Ehrlich S.D."/>
            <person name="Emmerson P.T."/>
            <person name="Entian K.-D."/>
            <person name="Errington J."/>
            <person name="Fabret C."/>
            <person name="Ferrari E."/>
            <person name="Foulger D."/>
            <person name="Fritz C."/>
            <person name="Fujita M."/>
            <person name="Fujita Y."/>
            <person name="Fuma S."/>
            <person name="Galizzi A."/>
            <person name="Galleron N."/>
            <person name="Ghim S.-Y."/>
            <person name="Glaser P."/>
            <person name="Goffeau A."/>
            <person name="Golightly E.J."/>
            <person name="Grandi G."/>
            <person name="Guiseppi G."/>
            <person name="Guy B.J."/>
            <person name="Haga K."/>
            <person name="Haiech J."/>
            <person name="Harwood C.R."/>
            <person name="Henaut A."/>
            <person name="Hilbert H."/>
            <person name="Holsappel S."/>
            <person name="Hosono S."/>
            <person name="Hullo M.-F."/>
            <person name="Itaya M."/>
            <person name="Jones L.-M."/>
            <person name="Joris B."/>
            <person name="Karamata D."/>
            <person name="Kasahara Y."/>
            <person name="Klaerr-Blanchard M."/>
            <person name="Klein C."/>
            <person name="Kobayashi Y."/>
            <person name="Koetter P."/>
            <person name="Koningstein G."/>
            <person name="Krogh S."/>
            <person name="Kumano M."/>
            <person name="Kurita K."/>
            <person name="Lapidus A."/>
            <person name="Lardinois S."/>
            <person name="Lauber J."/>
            <person name="Lazarevic V."/>
            <person name="Lee S.-M."/>
            <person name="Levine A."/>
            <person name="Liu H."/>
            <person name="Masuda S."/>
            <person name="Mauel C."/>
            <person name="Medigue C."/>
            <person name="Medina N."/>
            <person name="Mellado R.P."/>
            <person name="Mizuno M."/>
            <person name="Moestl D."/>
            <person name="Nakai S."/>
            <person name="Noback M."/>
            <person name="Noone D."/>
            <person name="O'Reilly M."/>
            <person name="Ogawa K."/>
            <person name="Ogiwara A."/>
            <person name="Oudega B."/>
            <person name="Park S.-H."/>
            <person name="Parro V."/>
            <person name="Pohl T.M."/>
            <person name="Portetelle D."/>
            <person name="Porwollik S."/>
            <person name="Prescott A.M."/>
            <person name="Presecan E."/>
            <person name="Pujic P."/>
            <person name="Purnelle B."/>
            <person name="Rapoport G."/>
            <person name="Rey M."/>
            <person name="Reynolds S."/>
            <person name="Rieger M."/>
            <person name="Rivolta C."/>
            <person name="Rocha E."/>
            <person name="Roche B."/>
            <person name="Rose M."/>
            <person name="Sadaie Y."/>
            <person name="Sato T."/>
            <person name="Scanlan E."/>
            <person name="Schleich S."/>
            <person name="Schroeter R."/>
            <person name="Scoffone F."/>
            <person name="Sekiguchi J."/>
            <person name="Sekowska A."/>
            <person name="Seror S.J."/>
            <person name="Serror P."/>
            <person name="Shin B.-S."/>
            <person name="Soldo B."/>
            <person name="Sorokin A."/>
            <person name="Tacconi E."/>
            <person name="Takagi T."/>
            <person name="Takahashi H."/>
            <person name="Takemaru K."/>
            <person name="Takeuchi M."/>
            <person name="Tamakoshi A."/>
            <person name="Tanaka T."/>
            <person name="Terpstra P."/>
            <person name="Tognoni A."/>
            <person name="Tosato V."/>
            <person name="Uchiyama S."/>
            <person name="Vandenbol M."/>
            <person name="Vannier F."/>
            <person name="Vassarotti A."/>
            <person name="Viari A."/>
            <person name="Wambutt R."/>
            <person name="Wedler E."/>
            <person name="Wedler H."/>
            <person name="Weitzenegger T."/>
            <person name="Winters P."/>
            <person name="Wipat A."/>
            <person name="Yamamoto H."/>
            <person name="Yamane K."/>
            <person name="Yasumoto K."/>
            <person name="Yata K."/>
            <person name="Yoshida K."/>
            <person name="Yoshikawa H.-F."/>
            <person name="Zumstein E."/>
            <person name="Yoshikawa H."/>
            <person name="Danchin A."/>
        </authorList>
    </citation>
    <scope>NUCLEOTIDE SEQUENCE [LARGE SCALE GENOMIC DNA]</scope>
    <source>
        <strain>168</strain>
    </source>
</reference>
<reference key="2">
    <citation type="journal article" date="2009" name="Microbiology">
        <title>From a consortium sequence to a unified sequence: the Bacillus subtilis 168 reference genome a decade later.</title>
        <authorList>
            <person name="Barbe V."/>
            <person name="Cruveiller S."/>
            <person name="Kunst F."/>
            <person name="Lenoble P."/>
            <person name="Meurice G."/>
            <person name="Sekowska A."/>
            <person name="Vallenet D."/>
            <person name="Wang T."/>
            <person name="Moszer I."/>
            <person name="Medigue C."/>
            <person name="Danchin A."/>
        </authorList>
    </citation>
    <scope>SEQUENCE REVISION TO 72</scope>
</reference>
<reference key="3">
    <citation type="journal article" date="2007" name="Nat. Chem. Biol.">
        <title>A new thiamin salvage pathway.</title>
        <authorList>
            <person name="Jenkins A.H."/>
            <person name="Schyns G."/>
            <person name="Potot S."/>
            <person name="Sun G."/>
            <person name="Begley T.P."/>
        </authorList>
    </citation>
    <scope>FUNCTION</scope>
    <scope>CATALYTIC ACTIVITY</scope>
    <scope>PATHWAY</scope>
</reference>
<feature type="chain" id="PRO_0000387967" description="N-formyl-4-amino-5-aminomethyl-2-methylpyrimidine deformylase">
    <location>
        <begin position="1"/>
        <end position="426"/>
    </location>
</feature>
<feature type="coiled-coil region" evidence="2">
    <location>
        <begin position="1"/>
        <end position="31"/>
    </location>
</feature>
<feature type="active site" evidence="1">
    <location>
        <position position="91"/>
    </location>
</feature>
<feature type="active site" description="Proton acceptor" evidence="1">
    <location>
        <position position="156"/>
    </location>
</feature>
<feature type="binding site" evidence="1">
    <location>
        <position position="89"/>
    </location>
    <ligand>
        <name>Zn(2+)</name>
        <dbReference type="ChEBI" id="CHEBI:29105"/>
        <label>1</label>
    </ligand>
</feature>
<feature type="binding site" evidence="1">
    <location>
        <position position="122"/>
    </location>
    <ligand>
        <name>Zn(2+)</name>
        <dbReference type="ChEBI" id="CHEBI:29105"/>
        <label>1</label>
    </ligand>
</feature>
<feature type="binding site" evidence="1">
    <location>
        <position position="122"/>
    </location>
    <ligand>
        <name>Zn(2+)</name>
        <dbReference type="ChEBI" id="CHEBI:29105"/>
        <label>2</label>
    </ligand>
</feature>
<feature type="binding site" evidence="1">
    <location>
        <position position="157"/>
    </location>
    <ligand>
        <name>Zn(2+)</name>
        <dbReference type="ChEBI" id="CHEBI:29105"/>
        <label>2</label>
    </ligand>
</feature>
<feature type="binding site" evidence="1">
    <location>
        <position position="180"/>
    </location>
    <ligand>
        <name>Zn(2+)</name>
        <dbReference type="ChEBI" id="CHEBI:29105"/>
        <label>1</label>
    </ligand>
</feature>
<feature type="binding site" evidence="1">
    <location>
        <position position="394"/>
    </location>
    <ligand>
        <name>Zn(2+)</name>
        <dbReference type="ChEBI" id="CHEBI:29105"/>
        <label>2</label>
    </ligand>
</feature>
<name>FAPD_BACSU</name>
<sequence>MDQQIYSLQKKVEEHKEELIQLAKTLISYQTPAPPARNTEGIQSWIAGYLNELGFSIDKWDVYPGDPNVVGKLKGTDSADYYSLIINGHVDVAEVKEDEEWKHDPFHPIEKNGLLIGRGASDMKGGMACVLFAVKLIREASIELPGDLILQSVIGEEVGEAGTLECCKRGYHADFAIVADTSDMHIQGQGGVITGWIEIKSSQTFHDGTRRNMIHAGGGTFGASAIEKMAKIIAGLGELERHWSIMKSYPGFKPGTNTINPAVIEGGRHAAFIADECRLWITVHFYPNETHDQVAAEIEDYVNRLSDSDIWLRENRPVFKWGGSSMIEDRGEIFPALEVDPGHPGVLALTASHQKVKRECPIIDVSQSVTDGGWLYDAGIPCVIYGPGDLHNAHSVNEKVSIEQLVEYTKIILDFIISWCSRKKEQ</sequence>
<evidence type="ECO:0000250" key="1"/>
<evidence type="ECO:0000255" key="2"/>
<evidence type="ECO:0000269" key="3">
    <source>
    </source>
</evidence>
<evidence type="ECO:0000303" key="4">
    <source>
    </source>
</evidence>
<evidence type="ECO:0000305" key="5"/>
<dbReference type="EC" id="3.5.1.-" evidence="3"/>
<dbReference type="EMBL" id="AL009126">
    <property type="protein sequence ID" value="CAB13409.2"/>
    <property type="molecule type" value="Genomic_DNA"/>
</dbReference>
<dbReference type="RefSeq" id="NP_389418.2">
    <property type="nucleotide sequence ID" value="NC_000964.3"/>
</dbReference>
<dbReference type="RefSeq" id="WP_003244730.1">
    <property type="nucleotide sequence ID" value="NZ_OZ025638.1"/>
</dbReference>
<dbReference type="SMR" id="O31724"/>
<dbReference type="FunCoup" id="O31724">
    <property type="interactions" value="382"/>
</dbReference>
<dbReference type="STRING" id="224308.BSU15350"/>
<dbReference type="MEROPS" id="M20.A19"/>
<dbReference type="PaxDb" id="224308-BSU15350"/>
<dbReference type="EnsemblBacteria" id="CAB13409">
    <property type="protein sequence ID" value="CAB13409"/>
    <property type="gene ID" value="BSU_15350"/>
</dbReference>
<dbReference type="GeneID" id="940116"/>
<dbReference type="KEGG" id="bsu:BSU15350"/>
<dbReference type="PATRIC" id="fig|224308.179.peg.1673"/>
<dbReference type="eggNOG" id="COG0624">
    <property type="taxonomic scope" value="Bacteria"/>
</dbReference>
<dbReference type="InParanoid" id="O31724"/>
<dbReference type="OrthoDB" id="9792335at2"/>
<dbReference type="PhylomeDB" id="O31724"/>
<dbReference type="BioCyc" id="BSUB:BSU15350-MONOMER"/>
<dbReference type="BioCyc" id="MetaCyc:BSU15350-MONOMER"/>
<dbReference type="UniPathway" id="UPA00060"/>
<dbReference type="Proteomes" id="UP000001570">
    <property type="component" value="Chromosome"/>
</dbReference>
<dbReference type="GO" id="GO:0016787">
    <property type="term" value="F:hydrolase activity"/>
    <property type="evidence" value="ECO:0007669"/>
    <property type="project" value="UniProtKB-KW"/>
</dbReference>
<dbReference type="GO" id="GO:0046872">
    <property type="term" value="F:metal ion binding"/>
    <property type="evidence" value="ECO:0007669"/>
    <property type="project" value="UniProtKB-KW"/>
</dbReference>
<dbReference type="GO" id="GO:0009228">
    <property type="term" value="P:thiamine biosynthetic process"/>
    <property type="evidence" value="ECO:0007669"/>
    <property type="project" value="UniProtKB-KW"/>
</dbReference>
<dbReference type="GO" id="GO:0009229">
    <property type="term" value="P:thiamine diphosphate biosynthetic process"/>
    <property type="evidence" value="ECO:0007669"/>
    <property type="project" value="UniProtKB-UniPathway"/>
</dbReference>
<dbReference type="Gene3D" id="3.30.70.360">
    <property type="match status" value="1"/>
</dbReference>
<dbReference type="Gene3D" id="3.40.630.10">
    <property type="entry name" value="Zn peptidases"/>
    <property type="match status" value="1"/>
</dbReference>
<dbReference type="InterPro" id="IPR010182">
    <property type="entry name" value="ArgE/DapE"/>
</dbReference>
<dbReference type="InterPro" id="IPR036264">
    <property type="entry name" value="Bact_exopeptidase_dim_dom"/>
</dbReference>
<dbReference type="InterPro" id="IPR002933">
    <property type="entry name" value="Peptidase_M20"/>
</dbReference>
<dbReference type="InterPro" id="IPR011650">
    <property type="entry name" value="Peptidase_M20_dimer"/>
</dbReference>
<dbReference type="InterPro" id="IPR050072">
    <property type="entry name" value="Peptidase_M20A"/>
</dbReference>
<dbReference type="NCBIfam" id="TIGR01910">
    <property type="entry name" value="DapE-ArgE"/>
    <property type="match status" value="1"/>
</dbReference>
<dbReference type="NCBIfam" id="NF006370">
    <property type="entry name" value="PRK08596.1"/>
    <property type="match status" value="1"/>
</dbReference>
<dbReference type="PANTHER" id="PTHR43808">
    <property type="entry name" value="ACETYLORNITHINE DEACETYLASE"/>
    <property type="match status" value="1"/>
</dbReference>
<dbReference type="PANTHER" id="PTHR43808:SF24">
    <property type="entry name" value="N-FORMYL-4-AMINO-5-AMINOMETHYL-2-METHYLPYRIMIDINE DEFORMYLASE"/>
    <property type="match status" value="1"/>
</dbReference>
<dbReference type="Pfam" id="PF07687">
    <property type="entry name" value="M20_dimer"/>
    <property type="match status" value="1"/>
</dbReference>
<dbReference type="Pfam" id="PF01546">
    <property type="entry name" value="Peptidase_M20"/>
    <property type="match status" value="1"/>
</dbReference>
<dbReference type="SUPFAM" id="SSF55031">
    <property type="entry name" value="Bacterial exopeptidase dimerisation domain"/>
    <property type="match status" value="1"/>
</dbReference>
<dbReference type="SUPFAM" id="SSF53187">
    <property type="entry name" value="Zn-dependent exopeptidases"/>
    <property type="match status" value="1"/>
</dbReference>
<comment type="function">
    <text evidence="3">Catalyzes the deformylation of the formylaminopyrimidine N-formyl-4-amino-5-aminomethyl-2-methylpyrimidine (FAMP) to give the corresponding aminopyrimidine.</text>
</comment>
<comment type="catalytic activity">
    <reaction evidence="3">
        <text>N-formyl-4-amino-5-aminomethyl-2-methylpyrimidine + H2O = 4-amino-5-aminomethyl-2-methylpyrimidine + formate</text>
        <dbReference type="Rhea" id="RHEA:46212"/>
        <dbReference type="ChEBI" id="CHEBI:15377"/>
        <dbReference type="ChEBI" id="CHEBI:15740"/>
        <dbReference type="ChEBI" id="CHEBI:63416"/>
        <dbReference type="ChEBI" id="CHEBI:85895"/>
    </reaction>
</comment>
<comment type="cofactor">
    <cofactor evidence="1">
        <name>Zn(2+)</name>
        <dbReference type="ChEBI" id="CHEBI:29105"/>
    </cofactor>
    <cofactor evidence="1">
        <name>Co(2+)</name>
        <dbReference type="ChEBI" id="CHEBI:48828"/>
    </cofactor>
    <text evidence="1">Binds 2 Zn(2+) or Co(2+) ions per subunit.</text>
</comment>
<comment type="pathway">
    <text evidence="3">Cofactor biosynthesis; thiamine diphosphate biosynthesis.</text>
</comment>
<comment type="similarity">
    <text evidence="5">Belongs to the peptidase M20A family.</text>
</comment>
<proteinExistence type="evidence at protein level"/>
<protein>
    <recommendedName>
        <fullName>N-formyl-4-amino-5-aminomethyl-2-methylpyrimidine deformylase</fullName>
        <shortName evidence="4">Formylaminopyrimidine deformylase</shortName>
        <ecNumber evidence="3">3.5.1.-</ecNumber>
    </recommendedName>
    <alternativeName>
        <fullName evidence="4">Amidohydrolase YlmB</fullName>
    </alternativeName>
</protein>
<organism>
    <name type="scientific">Bacillus subtilis (strain 168)</name>
    <dbReference type="NCBI Taxonomy" id="224308"/>
    <lineage>
        <taxon>Bacteria</taxon>
        <taxon>Bacillati</taxon>
        <taxon>Bacillota</taxon>
        <taxon>Bacilli</taxon>
        <taxon>Bacillales</taxon>
        <taxon>Bacillaceae</taxon>
        <taxon>Bacillus</taxon>
    </lineage>
</organism>
<accession>O31724</accession>
<keyword id="KW-0170">Cobalt</keyword>
<keyword id="KW-0175">Coiled coil</keyword>
<keyword id="KW-0378">Hydrolase</keyword>
<keyword id="KW-0479">Metal-binding</keyword>
<keyword id="KW-1185">Reference proteome</keyword>
<keyword id="KW-0784">Thiamine biosynthesis</keyword>
<keyword id="KW-0862">Zinc</keyword>
<gene>
    <name evidence="4" type="primary">ylmB</name>
    <name type="synonym">thiQ</name>
    <name type="ordered locus">BSU15350</name>
</gene>